<gene>
    <name evidence="1" type="primary">ribL</name>
    <name type="ordered locus">Arcpr_1573</name>
</gene>
<keyword id="KW-0067">ATP-binding</keyword>
<keyword id="KW-0274">FAD</keyword>
<keyword id="KW-0285">Flavoprotein</keyword>
<keyword id="KW-0288">FMN</keyword>
<keyword id="KW-0547">Nucleotide-binding</keyword>
<keyword id="KW-0548">Nucleotidyltransferase</keyword>
<keyword id="KW-1185">Reference proteome</keyword>
<keyword id="KW-0808">Transferase</keyword>
<protein>
    <recommendedName>
        <fullName evidence="1">FAD synthase</fullName>
        <ecNumber evidence="1">2.7.7.2</ecNumber>
    </recommendedName>
    <alternativeName>
        <fullName evidence="1">FMN adenylyltransferase</fullName>
    </alternativeName>
    <alternativeName>
        <fullName evidence="1">Flavin adenine dinucleotide synthase</fullName>
    </alternativeName>
</protein>
<proteinExistence type="inferred from homology"/>
<reference key="1">
    <citation type="journal article" date="2010" name="Stand. Genomic Sci.">
        <title>Complete genome sequence of Archaeoglobus profundus type strain (AV18).</title>
        <authorList>
            <person name="von Jan M."/>
            <person name="Lapidus A."/>
            <person name="Del Rio T.G."/>
            <person name="Copeland A."/>
            <person name="Tice H."/>
            <person name="Cheng J.F."/>
            <person name="Lucas S."/>
            <person name="Chen F."/>
            <person name="Nolan M."/>
            <person name="Goodwin L."/>
            <person name="Han C."/>
            <person name="Pitluck S."/>
            <person name="Liolios K."/>
            <person name="Ivanova N."/>
            <person name="Mavromatis K."/>
            <person name="Ovchinnikova G."/>
            <person name="Chertkov O."/>
            <person name="Pati A."/>
            <person name="Chen A."/>
            <person name="Palaniappan K."/>
            <person name="Land M."/>
            <person name="Hauser L."/>
            <person name="Chang Y.J."/>
            <person name="Jeffries C.D."/>
            <person name="Saunders E."/>
            <person name="Brettin T."/>
            <person name="Detter J.C."/>
            <person name="Chain P."/>
            <person name="Eichinger K."/>
            <person name="Huber H."/>
            <person name="Spring S."/>
            <person name="Rohde M."/>
            <person name="Goker M."/>
            <person name="Wirth R."/>
            <person name="Woyke T."/>
            <person name="Bristow J."/>
            <person name="Eisen J.A."/>
            <person name="Markowitz V."/>
            <person name="Hugenholtz P."/>
            <person name="Kyrpides N.C."/>
            <person name="Klenk H.P."/>
        </authorList>
    </citation>
    <scope>NUCLEOTIDE SEQUENCE [LARGE SCALE GENOMIC DNA]</scope>
    <source>
        <strain>DSM 5631 / JCM 9629 / NBRC 100127 / Av18</strain>
    </source>
</reference>
<name>RIBL_ARCPA</name>
<organism>
    <name type="scientific">Archaeoglobus profundus (strain DSM 5631 / JCM 9629 / NBRC 100127 / Av18)</name>
    <dbReference type="NCBI Taxonomy" id="572546"/>
    <lineage>
        <taxon>Archaea</taxon>
        <taxon>Methanobacteriati</taxon>
        <taxon>Methanobacteriota</taxon>
        <taxon>Archaeoglobi</taxon>
        <taxon>Archaeoglobales</taxon>
        <taxon>Archaeoglobaceae</taxon>
        <taxon>Archaeoglobus</taxon>
    </lineage>
</organism>
<dbReference type="EC" id="2.7.7.2" evidence="1"/>
<dbReference type="EMBL" id="CP001857">
    <property type="protein sequence ID" value="ADB58619.1"/>
    <property type="molecule type" value="Genomic_DNA"/>
</dbReference>
<dbReference type="RefSeq" id="WP_012940955.1">
    <property type="nucleotide sequence ID" value="NC_013741.1"/>
</dbReference>
<dbReference type="SMR" id="D2RES5"/>
<dbReference type="STRING" id="572546.Arcpr_1573"/>
<dbReference type="PaxDb" id="572546-Arcpr_1573"/>
<dbReference type="GeneID" id="8740264"/>
<dbReference type="KEGG" id="apo:Arcpr_1573"/>
<dbReference type="eggNOG" id="arCOG01222">
    <property type="taxonomic scope" value="Archaea"/>
</dbReference>
<dbReference type="HOGENOM" id="CLU_034585_2_1_2"/>
<dbReference type="OrthoDB" id="1912at2157"/>
<dbReference type="UniPathway" id="UPA00277">
    <property type="reaction ID" value="UER00407"/>
</dbReference>
<dbReference type="Proteomes" id="UP000001901">
    <property type="component" value="Chromosome"/>
</dbReference>
<dbReference type="GO" id="GO:0005524">
    <property type="term" value="F:ATP binding"/>
    <property type="evidence" value="ECO:0007669"/>
    <property type="project" value="UniProtKB-UniRule"/>
</dbReference>
<dbReference type="GO" id="GO:0003919">
    <property type="term" value="F:FMN adenylyltransferase activity"/>
    <property type="evidence" value="ECO:0007669"/>
    <property type="project" value="UniProtKB-UniRule"/>
</dbReference>
<dbReference type="GO" id="GO:0006747">
    <property type="term" value="P:FAD biosynthetic process"/>
    <property type="evidence" value="ECO:0007669"/>
    <property type="project" value="UniProtKB-UniRule"/>
</dbReference>
<dbReference type="GO" id="GO:0046444">
    <property type="term" value="P:FMN metabolic process"/>
    <property type="evidence" value="ECO:0007669"/>
    <property type="project" value="UniProtKB-UniRule"/>
</dbReference>
<dbReference type="CDD" id="cd02170">
    <property type="entry name" value="cytidylyltransferase"/>
    <property type="match status" value="1"/>
</dbReference>
<dbReference type="Gene3D" id="3.40.50.620">
    <property type="entry name" value="HUPs"/>
    <property type="match status" value="1"/>
</dbReference>
<dbReference type="HAMAP" id="MF_02115">
    <property type="entry name" value="FAD_synth_arch"/>
    <property type="match status" value="1"/>
</dbReference>
<dbReference type="InterPro" id="IPR050385">
    <property type="entry name" value="Archaeal_FAD_synthase"/>
</dbReference>
<dbReference type="InterPro" id="IPR004821">
    <property type="entry name" value="Cyt_trans-like"/>
</dbReference>
<dbReference type="InterPro" id="IPR024902">
    <property type="entry name" value="FAD_synth_RibL"/>
</dbReference>
<dbReference type="InterPro" id="IPR014729">
    <property type="entry name" value="Rossmann-like_a/b/a_fold"/>
</dbReference>
<dbReference type="NCBIfam" id="TIGR00125">
    <property type="entry name" value="cyt_tran_rel"/>
    <property type="match status" value="1"/>
</dbReference>
<dbReference type="PANTHER" id="PTHR43793">
    <property type="entry name" value="FAD SYNTHASE"/>
    <property type="match status" value="1"/>
</dbReference>
<dbReference type="PANTHER" id="PTHR43793:SF1">
    <property type="entry name" value="FAD SYNTHASE"/>
    <property type="match status" value="1"/>
</dbReference>
<dbReference type="Pfam" id="PF01467">
    <property type="entry name" value="CTP_transf_like"/>
    <property type="match status" value="1"/>
</dbReference>
<dbReference type="SUPFAM" id="SSF52374">
    <property type="entry name" value="Nucleotidylyl transferase"/>
    <property type="match status" value="1"/>
</dbReference>
<sequence length="155" mass="18086">MVRVVATGTFDIIHPGHIRFLEEAKKLGDELIVIVAREKNVRHKPKPIIPEEQRVRVVSALKPVDKAILGDEHDIFKPIMELKPDIIALGYDQHFDEKKLEEELRKRGLNTRVVRIKAKEECEYCSSTKIIKRIVDVVKSRLQEYEEFFRSRGML</sequence>
<feature type="chain" id="PRO_0000406233" description="FAD synthase">
    <location>
        <begin position="1"/>
        <end position="155"/>
    </location>
</feature>
<feature type="binding site" evidence="1">
    <location>
        <begin position="9"/>
        <end position="10"/>
    </location>
    <ligand>
        <name>ATP</name>
        <dbReference type="ChEBI" id="CHEBI:30616"/>
    </ligand>
</feature>
<feature type="binding site" evidence="1">
    <location>
        <begin position="14"/>
        <end position="17"/>
    </location>
    <ligand>
        <name>ATP</name>
        <dbReference type="ChEBI" id="CHEBI:30616"/>
    </ligand>
</feature>
<feature type="binding site" evidence="1">
    <location>
        <position position="92"/>
    </location>
    <ligand>
        <name>ATP</name>
        <dbReference type="ChEBI" id="CHEBI:30616"/>
    </ligand>
</feature>
<accession>D2RES5</accession>
<comment type="function">
    <text evidence="1">Catalyzes the transfer of the AMP portion of ATP to flavin mononucleotide (FMN) to produce flavin adenine dinucleotide (FAD) coenzyme.</text>
</comment>
<comment type="catalytic activity">
    <reaction evidence="1">
        <text>FMN + ATP + H(+) = FAD + diphosphate</text>
        <dbReference type="Rhea" id="RHEA:17237"/>
        <dbReference type="ChEBI" id="CHEBI:15378"/>
        <dbReference type="ChEBI" id="CHEBI:30616"/>
        <dbReference type="ChEBI" id="CHEBI:33019"/>
        <dbReference type="ChEBI" id="CHEBI:57692"/>
        <dbReference type="ChEBI" id="CHEBI:58210"/>
        <dbReference type="EC" id="2.7.7.2"/>
    </reaction>
</comment>
<comment type="cofactor">
    <cofactor evidence="1">
        <name>a divalent metal cation</name>
        <dbReference type="ChEBI" id="CHEBI:60240"/>
    </cofactor>
</comment>
<comment type="pathway">
    <text evidence="1">Cofactor biosynthesis; FAD biosynthesis; FAD from FMN: step 1/1.</text>
</comment>
<comment type="subunit">
    <text evidence="1">Homodimer.</text>
</comment>
<comment type="similarity">
    <text evidence="1">Belongs to the archaeal FAD synthase family.</text>
</comment>
<evidence type="ECO:0000255" key="1">
    <source>
        <dbReference type="HAMAP-Rule" id="MF_02115"/>
    </source>
</evidence>